<name>COAD_ECO5E</name>
<sequence>MQKRAIYPGTFDPITNGHIDIVTRATQMFDHVILAIAASPSKKPMFTLEERVALAQQATAHLGNVEVVGFSDLMANFARNQHATVLIRGLRAVADFEYEMQLAHMNRHLMPELESVFLMPSKEWSFISSSLVKEVARHQGDVTHFLPENVHQALMAKLA</sequence>
<organism>
    <name type="scientific">Escherichia coli O157:H7 (strain EC4115 / EHEC)</name>
    <dbReference type="NCBI Taxonomy" id="444450"/>
    <lineage>
        <taxon>Bacteria</taxon>
        <taxon>Pseudomonadati</taxon>
        <taxon>Pseudomonadota</taxon>
        <taxon>Gammaproteobacteria</taxon>
        <taxon>Enterobacterales</taxon>
        <taxon>Enterobacteriaceae</taxon>
        <taxon>Escherichia</taxon>
    </lineage>
</organism>
<comment type="function">
    <text evidence="1">Reversibly transfers an adenylyl group from ATP to 4'-phosphopantetheine, yielding dephospho-CoA (dPCoA) and pyrophosphate.</text>
</comment>
<comment type="catalytic activity">
    <reaction evidence="1">
        <text>(R)-4'-phosphopantetheine + ATP + H(+) = 3'-dephospho-CoA + diphosphate</text>
        <dbReference type="Rhea" id="RHEA:19801"/>
        <dbReference type="ChEBI" id="CHEBI:15378"/>
        <dbReference type="ChEBI" id="CHEBI:30616"/>
        <dbReference type="ChEBI" id="CHEBI:33019"/>
        <dbReference type="ChEBI" id="CHEBI:57328"/>
        <dbReference type="ChEBI" id="CHEBI:61723"/>
        <dbReference type="EC" id="2.7.7.3"/>
    </reaction>
</comment>
<comment type="cofactor">
    <cofactor evidence="1">
        <name>Mg(2+)</name>
        <dbReference type="ChEBI" id="CHEBI:18420"/>
    </cofactor>
</comment>
<comment type="pathway">
    <text evidence="1">Cofactor biosynthesis; coenzyme A biosynthesis; CoA from (R)-pantothenate: step 4/5.</text>
</comment>
<comment type="subunit">
    <text evidence="1">Homohexamer.</text>
</comment>
<comment type="subcellular location">
    <subcellularLocation>
        <location evidence="1">Cytoplasm</location>
    </subcellularLocation>
</comment>
<comment type="similarity">
    <text evidence="1">Belongs to the bacterial CoaD family.</text>
</comment>
<dbReference type="EC" id="2.7.7.3" evidence="1"/>
<dbReference type="EMBL" id="CP001164">
    <property type="protein sequence ID" value="ACI34683.1"/>
    <property type="molecule type" value="Genomic_DNA"/>
</dbReference>
<dbReference type="RefSeq" id="WP_001171866.1">
    <property type="nucleotide sequence ID" value="NC_011353.1"/>
</dbReference>
<dbReference type="SMR" id="B5YWD2"/>
<dbReference type="GeneID" id="75202203"/>
<dbReference type="KEGG" id="ecf:ECH74115_5004"/>
<dbReference type="HOGENOM" id="CLU_100149_0_1_6"/>
<dbReference type="UniPathway" id="UPA00241">
    <property type="reaction ID" value="UER00355"/>
</dbReference>
<dbReference type="GO" id="GO:0005737">
    <property type="term" value="C:cytoplasm"/>
    <property type="evidence" value="ECO:0007669"/>
    <property type="project" value="UniProtKB-SubCell"/>
</dbReference>
<dbReference type="GO" id="GO:0005524">
    <property type="term" value="F:ATP binding"/>
    <property type="evidence" value="ECO:0007669"/>
    <property type="project" value="UniProtKB-KW"/>
</dbReference>
<dbReference type="GO" id="GO:0004595">
    <property type="term" value="F:pantetheine-phosphate adenylyltransferase activity"/>
    <property type="evidence" value="ECO:0007669"/>
    <property type="project" value="UniProtKB-UniRule"/>
</dbReference>
<dbReference type="GO" id="GO:0015937">
    <property type="term" value="P:coenzyme A biosynthetic process"/>
    <property type="evidence" value="ECO:0007669"/>
    <property type="project" value="UniProtKB-UniRule"/>
</dbReference>
<dbReference type="CDD" id="cd02163">
    <property type="entry name" value="PPAT"/>
    <property type="match status" value="1"/>
</dbReference>
<dbReference type="FunFam" id="3.40.50.620:FF:000012">
    <property type="entry name" value="Phosphopantetheine adenylyltransferase"/>
    <property type="match status" value="1"/>
</dbReference>
<dbReference type="Gene3D" id="3.40.50.620">
    <property type="entry name" value="HUPs"/>
    <property type="match status" value="1"/>
</dbReference>
<dbReference type="HAMAP" id="MF_00151">
    <property type="entry name" value="PPAT_bact"/>
    <property type="match status" value="1"/>
</dbReference>
<dbReference type="InterPro" id="IPR004821">
    <property type="entry name" value="Cyt_trans-like"/>
</dbReference>
<dbReference type="InterPro" id="IPR001980">
    <property type="entry name" value="PPAT"/>
</dbReference>
<dbReference type="InterPro" id="IPR014729">
    <property type="entry name" value="Rossmann-like_a/b/a_fold"/>
</dbReference>
<dbReference type="NCBIfam" id="TIGR01510">
    <property type="entry name" value="coaD_prev_kdtB"/>
    <property type="match status" value="1"/>
</dbReference>
<dbReference type="NCBIfam" id="TIGR00125">
    <property type="entry name" value="cyt_tran_rel"/>
    <property type="match status" value="1"/>
</dbReference>
<dbReference type="PANTHER" id="PTHR21342">
    <property type="entry name" value="PHOSPHOPANTETHEINE ADENYLYLTRANSFERASE"/>
    <property type="match status" value="1"/>
</dbReference>
<dbReference type="PANTHER" id="PTHR21342:SF1">
    <property type="entry name" value="PHOSPHOPANTETHEINE ADENYLYLTRANSFERASE"/>
    <property type="match status" value="1"/>
</dbReference>
<dbReference type="Pfam" id="PF01467">
    <property type="entry name" value="CTP_transf_like"/>
    <property type="match status" value="1"/>
</dbReference>
<dbReference type="PRINTS" id="PR01020">
    <property type="entry name" value="LPSBIOSNTHSS"/>
</dbReference>
<dbReference type="SUPFAM" id="SSF52374">
    <property type="entry name" value="Nucleotidylyl transferase"/>
    <property type="match status" value="1"/>
</dbReference>
<keyword id="KW-0067">ATP-binding</keyword>
<keyword id="KW-0173">Coenzyme A biosynthesis</keyword>
<keyword id="KW-0963">Cytoplasm</keyword>
<keyword id="KW-0460">Magnesium</keyword>
<keyword id="KW-0547">Nucleotide-binding</keyword>
<keyword id="KW-0548">Nucleotidyltransferase</keyword>
<keyword id="KW-0808">Transferase</keyword>
<feature type="chain" id="PRO_1000096789" description="Phosphopantetheine adenylyltransferase">
    <location>
        <begin position="1"/>
        <end position="159"/>
    </location>
</feature>
<feature type="binding site" evidence="1">
    <location>
        <begin position="10"/>
        <end position="11"/>
    </location>
    <ligand>
        <name>ATP</name>
        <dbReference type="ChEBI" id="CHEBI:30616"/>
    </ligand>
</feature>
<feature type="binding site" evidence="1">
    <location>
        <position position="10"/>
    </location>
    <ligand>
        <name>substrate</name>
    </ligand>
</feature>
<feature type="binding site" evidence="1">
    <location>
        <position position="18"/>
    </location>
    <ligand>
        <name>ATP</name>
        <dbReference type="ChEBI" id="CHEBI:30616"/>
    </ligand>
</feature>
<feature type="binding site" evidence="1">
    <location>
        <position position="42"/>
    </location>
    <ligand>
        <name>substrate</name>
    </ligand>
</feature>
<feature type="binding site" evidence="1">
    <location>
        <position position="74"/>
    </location>
    <ligand>
        <name>substrate</name>
    </ligand>
</feature>
<feature type="binding site" evidence="1">
    <location>
        <position position="88"/>
    </location>
    <ligand>
        <name>substrate</name>
    </ligand>
</feature>
<feature type="binding site" evidence="1">
    <location>
        <begin position="89"/>
        <end position="91"/>
    </location>
    <ligand>
        <name>ATP</name>
        <dbReference type="ChEBI" id="CHEBI:30616"/>
    </ligand>
</feature>
<feature type="binding site" evidence="1">
    <location>
        <position position="99"/>
    </location>
    <ligand>
        <name>ATP</name>
        <dbReference type="ChEBI" id="CHEBI:30616"/>
    </ligand>
</feature>
<feature type="binding site" evidence="1">
    <location>
        <begin position="124"/>
        <end position="130"/>
    </location>
    <ligand>
        <name>ATP</name>
        <dbReference type="ChEBI" id="CHEBI:30616"/>
    </ligand>
</feature>
<feature type="site" description="Transition state stabilizer" evidence="1">
    <location>
        <position position="18"/>
    </location>
</feature>
<reference key="1">
    <citation type="journal article" date="2011" name="Proc. Natl. Acad. Sci. U.S.A.">
        <title>Genomic anatomy of Escherichia coli O157:H7 outbreaks.</title>
        <authorList>
            <person name="Eppinger M."/>
            <person name="Mammel M.K."/>
            <person name="Leclerc J.E."/>
            <person name="Ravel J."/>
            <person name="Cebula T.A."/>
        </authorList>
    </citation>
    <scope>NUCLEOTIDE SEQUENCE [LARGE SCALE GENOMIC DNA]</scope>
    <source>
        <strain>EC4115 / EHEC</strain>
    </source>
</reference>
<protein>
    <recommendedName>
        <fullName evidence="1">Phosphopantetheine adenylyltransferase</fullName>
        <ecNumber evidence="1">2.7.7.3</ecNumber>
    </recommendedName>
    <alternativeName>
        <fullName evidence="1">Dephospho-CoA pyrophosphorylase</fullName>
    </alternativeName>
    <alternativeName>
        <fullName evidence="1">Pantetheine-phosphate adenylyltransferase</fullName>
        <shortName evidence="1">PPAT</shortName>
    </alternativeName>
</protein>
<gene>
    <name evidence="1" type="primary">coaD</name>
    <name type="ordered locus">ECH74115_5004</name>
</gene>
<proteinExistence type="inferred from homology"/>
<evidence type="ECO:0000255" key="1">
    <source>
        <dbReference type="HAMAP-Rule" id="MF_00151"/>
    </source>
</evidence>
<accession>B5YWD2</accession>